<name>XERCL_CALS4</name>
<evidence type="ECO:0000250" key="1">
    <source>
        <dbReference type="UniProtKB" id="P0A8P8"/>
    </source>
</evidence>
<evidence type="ECO:0000255" key="2">
    <source>
        <dbReference type="PROSITE-ProRule" id="PRU01246"/>
    </source>
</evidence>
<evidence type="ECO:0000255" key="3">
    <source>
        <dbReference type="PROSITE-ProRule" id="PRU01248"/>
    </source>
</evidence>
<evidence type="ECO:0000305" key="4"/>
<gene>
    <name type="ordered locus">TTE2127</name>
</gene>
<sequence>MAKKTNYVKNGKEYYRVTVTIGRDENGKLIRKEFYGKTKKEAEAKKEEYLNGIRNGLNVDFQDVTLGDLMHTWLFEVVRMSRKPATFVKYEGHYRNYIKNSELYGMKISIIKSIQIQRYYNKLYQQGKSSKTIKALNNFLKTFFNYAVDEGYLAKNPCTGKKIVIPGTPEEKIETEIETFSDEEIKKIKEALKGHRLKALFLLAFGTGLRQGELLGLKWTDIDFEKKELRVQRMIKQVTIIDEKGNRKYKTIEQIPKTKNSIRTVPIPSSLIPMLKEHRNRQREEKLKAGSVYLNDVEKGYVFTTELGNTIDASNLLKTYKKILNRAGVPYRKFHAIRHTYATKLFERGVPLKTVSELLGHSNISITANIYTHVIPKQKTNAVETLNDLFI</sequence>
<proteinExistence type="inferred from homology"/>
<accession>Q8R890</accession>
<dbReference type="EMBL" id="AE008691">
    <property type="protein sequence ID" value="AAM25292.1"/>
    <property type="molecule type" value="Genomic_DNA"/>
</dbReference>
<dbReference type="RefSeq" id="WP_011026230.1">
    <property type="nucleotide sequence ID" value="NZ_JANUCV010000001.1"/>
</dbReference>
<dbReference type="SMR" id="Q8R890"/>
<dbReference type="STRING" id="273068.TTE2127"/>
<dbReference type="KEGG" id="tte:TTE2127"/>
<dbReference type="eggNOG" id="COG0582">
    <property type="taxonomic scope" value="Bacteria"/>
</dbReference>
<dbReference type="HOGENOM" id="CLU_027562_17_1_9"/>
<dbReference type="OrthoDB" id="9785687at2"/>
<dbReference type="Proteomes" id="UP000000555">
    <property type="component" value="Chromosome"/>
</dbReference>
<dbReference type="GO" id="GO:0005737">
    <property type="term" value="C:cytoplasm"/>
    <property type="evidence" value="ECO:0007669"/>
    <property type="project" value="UniProtKB-SubCell"/>
</dbReference>
<dbReference type="GO" id="GO:0003677">
    <property type="term" value="F:DNA binding"/>
    <property type="evidence" value="ECO:0007669"/>
    <property type="project" value="UniProtKB-KW"/>
</dbReference>
<dbReference type="GO" id="GO:0051301">
    <property type="term" value="P:cell division"/>
    <property type="evidence" value="ECO:0007669"/>
    <property type="project" value="UniProtKB-KW"/>
</dbReference>
<dbReference type="GO" id="GO:0007059">
    <property type="term" value="P:chromosome segregation"/>
    <property type="evidence" value="ECO:0007669"/>
    <property type="project" value="UniProtKB-KW"/>
</dbReference>
<dbReference type="GO" id="GO:0015074">
    <property type="term" value="P:DNA integration"/>
    <property type="evidence" value="ECO:0007669"/>
    <property type="project" value="UniProtKB-KW"/>
</dbReference>
<dbReference type="GO" id="GO:0006310">
    <property type="term" value="P:DNA recombination"/>
    <property type="evidence" value="ECO:0007669"/>
    <property type="project" value="UniProtKB-KW"/>
</dbReference>
<dbReference type="CDD" id="cd01189">
    <property type="entry name" value="INT_ICEBs1_C_like"/>
    <property type="match status" value="1"/>
</dbReference>
<dbReference type="Gene3D" id="1.10.150.130">
    <property type="match status" value="1"/>
</dbReference>
<dbReference type="Gene3D" id="1.10.443.10">
    <property type="entry name" value="Intergrase catalytic core"/>
    <property type="match status" value="1"/>
</dbReference>
<dbReference type="InterPro" id="IPR044068">
    <property type="entry name" value="CB"/>
</dbReference>
<dbReference type="InterPro" id="IPR011010">
    <property type="entry name" value="DNA_brk_join_enz"/>
</dbReference>
<dbReference type="InterPro" id="IPR013762">
    <property type="entry name" value="Integrase-like_cat_sf"/>
</dbReference>
<dbReference type="InterPro" id="IPR002104">
    <property type="entry name" value="Integrase_catalytic"/>
</dbReference>
<dbReference type="InterPro" id="IPR010998">
    <property type="entry name" value="Integrase_recombinase_N"/>
</dbReference>
<dbReference type="InterPro" id="IPR004107">
    <property type="entry name" value="Integrase_SAM-like_N"/>
</dbReference>
<dbReference type="InterPro" id="IPR050090">
    <property type="entry name" value="Tyrosine_recombinase_XerCD"/>
</dbReference>
<dbReference type="PANTHER" id="PTHR30349">
    <property type="entry name" value="PHAGE INTEGRASE-RELATED"/>
    <property type="match status" value="1"/>
</dbReference>
<dbReference type="PANTHER" id="PTHR30349:SF64">
    <property type="entry name" value="PROPHAGE INTEGRASE INTD-RELATED"/>
    <property type="match status" value="1"/>
</dbReference>
<dbReference type="Pfam" id="PF14659">
    <property type="entry name" value="Phage_int_SAM_3"/>
    <property type="match status" value="1"/>
</dbReference>
<dbReference type="Pfam" id="PF00589">
    <property type="entry name" value="Phage_integrase"/>
    <property type="match status" value="1"/>
</dbReference>
<dbReference type="SUPFAM" id="SSF56349">
    <property type="entry name" value="DNA breaking-rejoining enzymes"/>
    <property type="match status" value="1"/>
</dbReference>
<dbReference type="PROSITE" id="PS51900">
    <property type="entry name" value="CB"/>
    <property type="match status" value="1"/>
</dbReference>
<dbReference type="PROSITE" id="PS51898">
    <property type="entry name" value="TYR_RECOMBINASE"/>
    <property type="match status" value="1"/>
</dbReference>
<comment type="function">
    <text evidence="1">Site-specific tyrosine recombinase, which acts by catalyzing the cutting and rejoining of the recombining DNA molecules.</text>
</comment>
<comment type="subcellular location">
    <subcellularLocation>
        <location evidence="4">Cytoplasm</location>
    </subcellularLocation>
</comment>
<comment type="miscellaneous">
    <text evidence="4">In contrast to other XerC proteins, it has a much longer N-terminal part.</text>
</comment>
<comment type="similarity">
    <text evidence="4">Belongs to the 'phage' integrase family.</text>
</comment>
<organism>
    <name type="scientific">Caldanaerobacter subterraneus subsp. tengcongensis (strain DSM 15242 / JCM 11007 / NBRC 100824 / MB4)</name>
    <name type="common">Thermoanaerobacter tengcongensis</name>
    <dbReference type="NCBI Taxonomy" id="273068"/>
    <lineage>
        <taxon>Bacteria</taxon>
        <taxon>Bacillati</taxon>
        <taxon>Bacillota</taxon>
        <taxon>Clostridia</taxon>
        <taxon>Thermoanaerobacterales</taxon>
        <taxon>Thermoanaerobacteraceae</taxon>
        <taxon>Caldanaerobacter</taxon>
    </lineage>
</organism>
<keyword id="KW-0131">Cell cycle</keyword>
<keyword id="KW-0132">Cell division</keyword>
<keyword id="KW-0159">Chromosome partition</keyword>
<keyword id="KW-0963">Cytoplasm</keyword>
<keyword id="KW-0229">DNA integration</keyword>
<keyword id="KW-0233">DNA recombination</keyword>
<keyword id="KW-0238">DNA-binding</keyword>
<keyword id="KW-1185">Reference proteome</keyword>
<reference key="1">
    <citation type="journal article" date="2002" name="Genome Res.">
        <title>A complete sequence of the T. tengcongensis genome.</title>
        <authorList>
            <person name="Bao Q."/>
            <person name="Tian Y."/>
            <person name="Li W."/>
            <person name="Xu Z."/>
            <person name="Xuan Z."/>
            <person name="Hu S."/>
            <person name="Dong W."/>
            <person name="Yang J."/>
            <person name="Chen Y."/>
            <person name="Xue Y."/>
            <person name="Xu Y."/>
            <person name="Lai X."/>
            <person name="Huang L."/>
            <person name="Dong X."/>
            <person name="Ma Y."/>
            <person name="Ling L."/>
            <person name="Tan H."/>
            <person name="Chen R."/>
            <person name="Wang J."/>
            <person name="Yu J."/>
            <person name="Yang H."/>
        </authorList>
    </citation>
    <scope>NUCLEOTIDE SEQUENCE [LARGE SCALE GENOMIC DNA]</scope>
    <source>
        <strain>DSM 15242 / JCM 11007 / NBRC 100824 / MB4</strain>
    </source>
</reference>
<feature type="chain" id="PRO_0000095353" description="Tyrosine recombinase XerC-like">
    <location>
        <begin position="1"/>
        <end position="391"/>
    </location>
</feature>
<feature type="domain" description="Core-binding (CB)" evidence="3">
    <location>
        <begin position="64"/>
        <end position="148"/>
    </location>
</feature>
<feature type="domain" description="Tyr recombinase" evidence="2">
    <location>
        <begin position="175"/>
        <end position="384"/>
    </location>
</feature>
<feature type="active site" evidence="2">
    <location>
        <position position="210"/>
    </location>
</feature>
<feature type="active site" evidence="2">
    <location>
        <position position="244"/>
    </location>
</feature>
<feature type="active site" evidence="2">
    <location>
        <position position="335"/>
    </location>
</feature>
<feature type="active site" evidence="2">
    <location>
        <position position="338"/>
    </location>
</feature>
<feature type="active site" evidence="2">
    <location>
        <position position="361"/>
    </location>
</feature>
<feature type="active site" description="O-(3'-phospho-DNA)-tyrosine intermediate" evidence="2">
    <location>
        <position position="371"/>
    </location>
</feature>
<protein>
    <recommendedName>
        <fullName evidence="4">Tyrosine recombinase XerC-like</fullName>
    </recommendedName>
</protein>